<protein>
    <recommendedName>
        <fullName>Uncharacterized acyl--CoA ligase YtcI</fullName>
        <ecNumber>6.2.1.-</ecNumber>
    </recommendedName>
</protein>
<name>YTCI_BACSU</name>
<comment type="similarity">
    <text evidence="2">Belongs to the ATP-dependent AMP-binding enzyme family.</text>
</comment>
<comment type="sequence caution" evidence="2">
    <conflict type="erroneous initiation">
        <sequence resource="EMBL-CDS" id="AAC00310"/>
    </conflict>
</comment>
<proteinExistence type="inferred from homology"/>
<feature type="chain" id="PRO_0000390294" description="Uncharacterized acyl--CoA ligase YtcI">
    <location>
        <begin position="1"/>
        <end position="529"/>
    </location>
</feature>
<feature type="binding site" evidence="1">
    <location>
        <begin position="178"/>
        <end position="186"/>
    </location>
    <ligand>
        <name>ATP</name>
        <dbReference type="ChEBI" id="CHEBI:30616"/>
    </ligand>
</feature>
<feature type="binding site" evidence="1">
    <location>
        <position position="401"/>
    </location>
    <ligand>
        <name>ATP</name>
        <dbReference type="ChEBI" id="CHEBI:30616"/>
    </ligand>
</feature>
<feature type="binding site" evidence="1">
    <location>
        <position position="416"/>
    </location>
    <ligand>
        <name>ATP</name>
        <dbReference type="ChEBI" id="CHEBI:30616"/>
    </ligand>
</feature>
<feature type="binding site" evidence="1">
    <location>
        <position position="510"/>
    </location>
    <ligand>
        <name>ATP</name>
        <dbReference type="ChEBI" id="CHEBI:30616"/>
    </ligand>
</feature>
<dbReference type="EC" id="6.2.1.-"/>
<dbReference type="EMBL" id="AF008220">
    <property type="protein sequence ID" value="AAC00310.1"/>
    <property type="status" value="ALT_INIT"/>
    <property type="molecule type" value="Genomic_DNA"/>
</dbReference>
<dbReference type="EMBL" id="AL009126">
    <property type="protein sequence ID" value="CAB14934.2"/>
    <property type="molecule type" value="Genomic_DNA"/>
</dbReference>
<dbReference type="RefSeq" id="NP_390834.2">
    <property type="nucleotide sequence ID" value="NC_000964.3"/>
</dbReference>
<dbReference type="SMR" id="C0SPB0"/>
<dbReference type="FunCoup" id="C0SPB0">
    <property type="interactions" value="161"/>
</dbReference>
<dbReference type="IntAct" id="C0SPB0">
    <property type="interactions" value="1"/>
</dbReference>
<dbReference type="MINT" id="C0SPB0"/>
<dbReference type="STRING" id="224308.BSU29560"/>
<dbReference type="jPOST" id="C0SPB0"/>
<dbReference type="PaxDb" id="224308-BSU29560"/>
<dbReference type="EnsemblBacteria" id="CAB14934">
    <property type="protein sequence ID" value="CAB14934"/>
    <property type="gene ID" value="BSU_29560"/>
</dbReference>
<dbReference type="GeneID" id="937336"/>
<dbReference type="KEGG" id="bsu:BSU29560"/>
<dbReference type="PATRIC" id="fig|224308.179.peg.3212"/>
<dbReference type="eggNOG" id="COG0365">
    <property type="taxonomic scope" value="Bacteria"/>
</dbReference>
<dbReference type="InParanoid" id="C0SPB0"/>
<dbReference type="OrthoDB" id="9778383at2"/>
<dbReference type="PhylomeDB" id="C0SPB0"/>
<dbReference type="BioCyc" id="BSUB:BSU29560-MONOMER"/>
<dbReference type="Proteomes" id="UP000001570">
    <property type="component" value="Chromosome"/>
</dbReference>
<dbReference type="GO" id="GO:0005524">
    <property type="term" value="F:ATP binding"/>
    <property type="evidence" value="ECO:0007669"/>
    <property type="project" value="UniProtKB-KW"/>
</dbReference>
<dbReference type="GO" id="GO:0016405">
    <property type="term" value="F:CoA-ligase activity"/>
    <property type="evidence" value="ECO:0007669"/>
    <property type="project" value="UniProtKB-ARBA"/>
</dbReference>
<dbReference type="GO" id="GO:0015645">
    <property type="term" value="F:fatty acid ligase activity"/>
    <property type="evidence" value="ECO:0000318"/>
    <property type="project" value="GO_Central"/>
</dbReference>
<dbReference type="GO" id="GO:0004321">
    <property type="term" value="F:fatty-acyl-CoA synthase activity"/>
    <property type="evidence" value="ECO:0000318"/>
    <property type="project" value="GO_Central"/>
</dbReference>
<dbReference type="GO" id="GO:0006637">
    <property type="term" value="P:acyl-CoA metabolic process"/>
    <property type="evidence" value="ECO:0000318"/>
    <property type="project" value="GO_Central"/>
</dbReference>
<dbReference type="GO" id="GO:0006633">
    <property type="term" value="P:fatty acid biosynthetic process"/>
    <property type="evidence" value="ECO:0000318"/>
    <property type="project" value="GO_Central"/>
</dbReference>
<dbReference type="CDD" id="cd05972">
    <property type="entry name" value="MACS_like"/>
    <property type="match status" value="1"/>
</dbReference>
<dbReference type="FunFam" id="3.40.50.12780:FF:000032">
    <property type="entry name" value="Acyl--CoA ligase"/>
    <property type="match status" value="1"/>
</dbReference>
<dbReference type="FunFam" id="3.30.300.30:FF:000005">
    <property type="entry name" value="Acyl-coenzyme A synthetase ACSM5, mitochondrial"/>
    <property type="match status" value="1"/>
</dbReference>
<dbReference type="Gene3D" id="3.30.300.30">
    <property type="match status" value="1"/>
</dbReference>
<dbReference type="Gene3D" id="3.40.50.12780">
    <property type="entry name" value="N-terminal domain of ligase-like"/>
    <property type="match status" value="1"/>
</dbReference>
<dbReference type="InterPro" id="IPR025110">
    <property type="entry name" value="AMP-bd_C"/>
</dbReference>
<dbReference type="InterPro" id="IPR045851">
    <property type="entry name" value="AMP-bd_C_sf"/>
</dbReference>
<dbReference type="InterPro" id="IPR020845">
    <property type="entry name" value="AMP-binding_CS"/>
</dbReference>
<dbReference type="InterPro" id="IPR000873">
    <property type="entry name" value="AMP-dep_synth/lig_dom"/>
</dbReference>
<dbReference type="InterPro" id="IPR042099">
    <property type="entry name" value="ANL_N_sf"/>
</dbReference>
<dbReference type="InterPro" id="IPR051087">
    <property type="entry name" value="Mitochondrial_ACSM"/>
</dbReference>
<dbReference type="NCBIfam" id="NF047394">
    <property type="entry name" value="AcylCoAsynMbcS"/>
    <property type="match status" value="1"/>
</dbReference>
<dbReference type="PANTHER" id="PTHR43605:SF10">
    <property type="entry name" value="ACYL-COA SYNTHETASE MEDIUM CHAIN FAMILY MEMBER 3"/>
    <property type="match status" value="1"/>
</dbReference>
<dbReference type="PANTHER" id="PTHR43605">
    <property type="entry name" value="ACYL-COENZYME A SYNTHETASE"/>
    <property type="match status" value="1"/>
</dbReference>
<dbReference type="Pfam" id="PF00501">
    <property type="entry name" value="AMP-binding"/>
    <property type="match status" value="1"/>
</dbReference>
<dbReference type="Pfam" id="PF13193">
    <property type="entry name" value="AMP-binding_C"/>
    <property type="match status" value="1"/>
</dbReference>
<dbReference type="SUPFAM" id="SSF56801">
    <property type="entry name" value="Acetyl-CoA synthetase-like"/>
    <property type="match status" value="1"/>
</dbReference>
<dbReference type="PROSITE" id="PS00455">
    <property type="entry name" value="AMP_BINDING"/>
    <property type="match status" value="1"/>
</dbReference>
<reference key="1">
    <citation type="journal article" date="1997" name="Microbiology">
        <title>Sequencing and functional annotation of the Bacillus subtilis genes in the 200 kb rrnB-dnaB region.</title>
        <authorList>
            <person name="Lapidus A."/>
            <person name="Galleron N."/>
            <person name="Sorokin A."/>
            <person name="Ehrlich S.D."/>
        </authorList>
    </citation>
    <scope>NUCLEOTIDE SEQUENCE [GENOMIC DNA]</scope>
</reference>
<reference key="2">
    <citation type="journal article" date="1997" name="Nature">
        <title>The complete genome sequence of the Gram-positive bacterium Bacillus subtilis.</title>
        <authorList>
            <person name="Kunst F."/>
            <person name="Ogasawara N."/>
            <person name="Moszer I."/>
            <person name="Albertini A.M."/>
            <person name="Alloni G."/>
            <person name="Azevedo V."/>
            <person name="Bertero M.G."/>
            <person name="Bessieres P."/>
            <person name="Bolotin A."/>
            <person name="Borchert S."/>
            <person name="Borriss R."/>
            <person name="Boursier L."/>
            <person name="Brans A."/>
            <person name="Braun M."/>
            <person name="Brignell S.C."/>
            <person name="Bron S."/>
            <person name="Brouillet S."/>
            <person name="Bruschi C.V."/>
            <person name="Caldwell B."/>
            <person name="Capuano V."/>
            <person name="Carter N.M."/>
            <person name="Choi S.-K."/>
            <person name="Codani J.-J."/>
            <person name="Connerton I.F."/>
            <person name="Cummings N.J."/>
            <person name="Daniel R.A."/>
            <person name="Denizot F."/>
            <person name="Devine K.M."/>
            <person name="Duesterhoeft A."/>
            <person name="Ehrlich S.D."/>
            <person name="Emmerson P.T."/>
            <person name="Entian K.-D."/>
            <person name="Errington J."/>
            <person name="Fabret C."/>
            <person name="Ferrari E."/>
            <person name="Foulger D."/>
            <person name="Fritz C."/>
            <person name="Fujita M."/>
            <person name="Fujita Y."/>
            <person name="Fuma S."/>
            <person name="Galizzi A."/>
            <person name="Galleron N."/>
            <person name="Ghim S.-Y."/>
            <person name="Glaser P."/>
            <person name="Goffeau A."/>
            <person name="Golightly E.J."/>
            <person name="Grandi G."/>
            <person name="Guiseppi G."/>
            <person name="Guy B.J."/>
            <person name="Haga K."/>
            <person name="Haiech J."/>
            <person name="Harwood C.R."/>
            <person name="Henaut A."/>
            <person name="Hilbert H."/>
            <person name="Holsappel S."/>
            <person name="Hosono S."/>
            <person name="Hullo M.-F."/>
            <person name="Itaya M."/>
            <person name="Jones L.-M."/>
            <person name="Joris B."/>
            <person name="Karamata D."/>
            <person name="Kasahara Y."/>
            <person name="Klaerr-Blanchard M."/>
            <person name="Klein C."/>
            <person name="Kobayashi Y."/>
            <person name="Koetter P."/>
            <person name="Koningstein G."/>
            <person name="Krogh S."/>
            <person name="Kumano M."/>
            <person name="Kurita K."/>
            <person name="Lapidus A."/>
            <person name="Lardinois S."/>
            <person name="Lauber J."/>
            <person name="Lazarevic V."/>
            <person name="Lee S.-M."/>
            <person name="Levine A."/>
            <person name="Liu H."/>
            <person name="Masuda S."/>
            <person name="Mauel C."/>
            <person name="Medigue C."/>
            <person name="Medina N."/>
            <person name="Mellado R.P."/>
            <person name="Mizuno M."/>
            <person name="Moestl D."/>
            <person name="Nakai S."/>
            <person name="Noback M."/>
            <person name="Noone D."/>
            <person name="O'Reilly M."/>
            <person name="Ogawa K."/>
            <person name="Ogiwara A."/>
            <person name="Oudega B."/>
            <person name="Park S.-H."/>
            <person name="Parro V."/>
            <person name="Pohl T.M."/>
            <person name="Portetelle D."/>
            <person name="Porwollik S."/>
            <person name="Prescott A.M."/>
            <person name="Presecan E."/>
            <person name="Pujic P."/>
            <person name="Purnelle B."/>
            <person name="Rapoport G."/>
            <person name="Rey M."/>
            <person name="Reynolds S."/>
            <person name="Rieger M."/>
            <person name="Rivolta C."/>
            <person name="Rocha E."/>
            <person name="Roche B."/>
            <person name="Rose M."/>
            <person name="Sadaie Y."/>
            <person name="Sato T."/>
            <person name="Scanlan E."/>
            <person name="Schleich S."/>
            <person name="Schroeter R."/>
            <person name="Scoffone F."/>
            <person name="Sekiguchi J."/>
            <person name="Sekowska A."/>
            <person name="Seror S.J."/>
            <person name="Serror P."/>
            <person name="Shin B.-S."/>
            <person name="Soldo B."/>
            <person name="Sorokin A."/>
            <person name="Tacconi E."/>
            <person name="Takagi T."/>
            <person name="Takahashi H."/>
            <person name="Takemaru K."/>
            <person name="Takeuchi M."/>
            <person name="Tamakoshi A."/>
            <person name="Tanaka T."/>
            <person name="Terpstra P."/>
            <person name="Tognoni A."/>
            <person name="Tosato V."/>
            <person name="Uchiyama S."/>
            <person name="Vandenbol M."/>
            <person name="Vannier F."/>
            <person name="Vassarotti A."/>
            <person name="Viari A."/>
            <person name="Wambutt R."/>
            <person name="Wedler E."/>
            <person name="Wedler H."/>
            <person name="Weitzenegger T."/>
            <person name="Winters P."/>
            <person name="Wipat A."/>
            <person name="Yamamoto H."/>
            <person name="Yamane K."/>
            <person name="Yasumoto K."/>
            <person name="Yata K."/>
            <person name="Yoshida K."/>
            <person name="Yoshikawa H.-F."/>
            <person name="Zumstein E."/>
            <person name="Yoshikawa H."/>
            <person name="Danchin A."/>
        </authorList>
    </citation>
    <scope>NUCLEOTIDE SEQUENCE [LARGE SCALE GENOMIC DNA]</scope>
    <source>
        <strain>168</strain>
    </source>
</reference>
<keyword id="KW-0067">ATP-binding</keyword>
<keyword id="KW-0436">Ligase</keyword>
<keyword id="KW-0547">Nucleotide-binding</keyword>
<keyword id="KW-1185">Reference proteome</keyword>
<evidence type="ECO:0000255" key="1"/>
<evidence type="ECO:0000305" key="2"/>
<sequence>MLKREDLIAPVQYNLVNEMEKFSAAGQKTALLWEDESGKQESWSYEKLMEETNKIGAALADLGFKKGDKLIVMVPRVLEAYAVYLAILKSGMVVIPCSEMLRAKDLEYRIEHAEVKGAIVYSEFIGAFRDVSTADKLITLSIGENDAGWKNLLSIEADGSQFKTADTTRDDMAFLSYTSGTTGQPKGVVHTHGWAFAHLKTSAGAWLDISEKDIVWATAAPGWQKWVWSPFLAVLGSGATGFVYHGRFKAEKYLELLNRYKINVFCCTPTEYRLMAKVEGLKRFDLSALHSAVSAGEPLNREVIDVFQKHFGIKVRDGYGQTESTLLVGVLKDTPIKPGSMGKPTPGNQVEIINEDGEICKPGEVGDIAVHLSTPALFKEYFKDPERMKTQIRGDYFLTGDRARKDEEGYFWFESRNDDIIISSGYTIGPFEVEDALVKHPEVKECAVVASPDEIRGSIVKAYVVLQNHEKRSDELVKMLQNHVKTITAPYKYPREIEFVESLPKTASAKIRRVELRKREEQLKANKKA</sequence>
<organism>
    <name type="scientific">Bacillus subtilis (strain 168)</name>
    <dbReference type="NCBI Taxonomy" id="224308"/>
    <lineage>
        <taxon>Bacteria</taxon>
        <taxon>Bacillati</taxon>
        <taxon>Bacillota</taxon>
        <taxon>Bacilli</taxon>
        <taxon>Bacillales</taxon>
        <taxon>Bacillaceae</taxon>
        <taxon>Bacillus</taxon>
    </lineage>
</organism>
<gene>
    <name type="primary">ytcI</name>
    <name type="ordered locus">BSU29560</name>
</gene>
<accession>C0SPB0</accession>
<accession>O34613</accession>
<accession>Q795T8</accession>